<proteinExistence type="evidence at protein level"/>
<name>MDTI_ECOLI</name>
<sequence>MAQFEWVHAAWLALAIVLEIVANVFLKFSDGFRRKIFGLLSLAAVLAAFSALSQAVKGIDLSVAYALWGGFGIAATLAAGWILFGQRLNRKGWIGLVLLLAGMIMVKLA</sequence>
<keyword id="KW-0997">Cell inner membrane</keyword>
<keyword id="KW-1003">Cell membrane</keyword>
<keyword id="KW-0472">Membrane</keyword>
<keyword id="KW-1185">Reference proteome</keyword>
<keyword id="KW-0812">Transmembrane</keyword>
<keyword id="KW-1133">Transmembrane helix</keyword>
<keyword id="KW-0813">Transport</keyword>
<accession>P69210</accession>
<accession>P77670</accession>
<evidence type="ECO:0000255" key="1"/>
<evidence type="ECO:0000255" key="2">
    <source>
        <dbReference type="HAMAP-Rule" id="MF_01597"/>
    </source>
</evidence>
<evidence type="ECO:0000269" key="3">
    <source>
    </source>
</evidence>
<evidence type="ECO:0000269" key="4">
    <source>
    </source>
</evidence>
<evidence type="ECO:0000305" key="5"/>
<evidence type="ECO:0000305" key="6">
    <source>
    </source>
</evidence>
<gene>
    <name type="primary">mdtI</name>
    <name type="synonym">ydgE</name>
    <name type="ordered locus">b1599</name>
    <name type="ordered locus">JW1591</name>
</gene>
<organism>
    <name type="scientific">Escherichia coli (strain K12)</name>
    <dbReference type="NCBI Taxonomy" id="83333"/>
    <lineage>
        <taxon>Bacteria</taxon>
        <taxon>Pseudomonadati</taxon>
        <taxon>Pseudomonadota</taxon>
        <taxon>Gammaproteobacteria</taxon>
        <taxon>Enterobacterales</taxon>
        <taxon>Enterobacteriaceae</taxon>
        <taxon>Escherichia</taxon>
    </lineage>
</organism>
<protein>
    <recommendedName>
        <fullName>Spermidine export protein MdtI</fullName>
    </recommendedName>
</protein>
<dbReference type="EMBL" id="U00096">
    <property type="protein sequence ID" value="AAC74671.1"/>
    <property type="molecule type" value="Genomic_DNA"/>
</dbReference>
<dbReference type="EMBL" id="AP009048">
    <property type="protein sequence ID" value="BAA15333.1"/>
    <property type="molecule type" value="Genomic_DNA"/>
</dbReference>
<dbReference type="PIR" id="A64916">
    <property type="entry name" value="A64916"/>
</dbReference>
<dbReference type="RefSeq" id="NP_416116.1">
    <property type="nucleotide sequence ID" value="NC_000913.3"/>
</dbReference>
<dbReference type="RefSeq" id="WP_000046661.1">
    <property type="nucleotide sequence ID" value="NZ_STEB01000003.1"/>
</dbReference>
<dbReference type="SMR" id="P69210"/>
<dbReference type="BioGRID" id="4259124">
    <property type="interactions" value="495"/>
</dbReference>
<dbReference type="ComplexPortal" id="CPX-6020">
    <property type="entry name" value="MdtIJ spermidine export complex"/>
</dbReference>
<dbReference type="FunCoup" id="P69210">
    <property type="interactions" value="12"/>
</dbReference>
<dbReference type="IntAct" id="P69210">
    <property type="interactions" value="1"/>
</dbReference>
<dbReference type="STRING" id="511145.b1599"/>
<dbReference type="TCDB" id="2.A.7.1.9">
    <property type="family name" value="the drug/metabolite transporter (dmt) superfamily"/>
</dbReference>
<dbReference type="PaxDb" id="511145-b1599"/>
<dbReference type="DNASU" id="947333"/>
<dbReference type="EnsemblBacteria" id="AAC74671">
    <property type="protein sequence ID" value="AAC74671"/>
    <property type="gene ID" value="b1599"/>
</dbReference>
<dbReference type="GeneID" id="93775747"/>
<dbReference type="GeneID" id="947333"/>
<dbReference type="KEGG" id="ecj:JW1591"/>
<dbReference type="KEGG" id="eco:b1599"/>
<dbReference type="KEGG" id="ecoc:C3026_09210"/>
<dbReference type="PATRIC" id="fig|1411691.4.peg.663"/>
<dbReference type="EchoBASE" id="EB3685"/>
<dbReference type="eggNOG" id="COG2076">
    <property type="taxonomic scope" value="Bacteria"/>
</dbReference>
<dbReference type="HOGENOM" id="CLU_133067_0_4_6"/>
<dbReference type="InParanoid" id="P69210"/>
<dbReference type="OMA" id="VAAGWIM"/>
<dbReference type="OrthoDB" id="71834at2"/>
<dbReference type="PhylomeDB" id="P69210"/>
<dbReference type="BioCyc" id="EcoCyc:B1599-MONOMER"/>
<dbReference type="BioCyc" id="MetaCyc:B1599-MONOMER"/>
<dbReference type="PRO" id="PR:P69210"/>
<dbReference type="Proteomes" id="UP000000625">
    <property type="component" value="Chromosome"/>
</dbReference>
<dbReference type="GO" id="GO:0005886">
    <property type="term" value="C:plasma membrane"/>
    <property type="evidence" value="ECO:0000255"/>
    <property type="project" value="EcoCyc"/>
</dbReference>
<dbReference type="GO" id="GO:1902495">
    <property type="term" value="C:transmembrane transporter complex"/>
    <property type="evidence" value="ECO:0000353"/>
    <property type="project" value="ComplexPortal"/>
</dbReference>
<dbReference type="GO" id="GO:0015199">
    <property type="term" value="F:amino-acid betaine transmembrane transporter activity"/>
    <property type="evidence" value="ECO:0000318"/>
    <property type="project" value="GO_Central"/>
</dbReference>
<dbReference type="GO" id="GO:0015297">
    <property type="term" value="F:antiporter activity"/>
    <property type="evidence" value="ECO:0000318"/>
    <property type="project" value="GO_Central"/>
</dbReference>
<dbReference type="GO" id="GO:0015220">
    <property type="term" value="F:choline transmembrane transporter activity"/>
    <property type="evidence" value="ECO:0000318"/>
    <property type="project" value="GO_Central"/>
</dbReference>
<dbReference type="GO" id="GO:0015606">
    <property type="term" value="F:spermidine transmembrane transporter activity"/>
    <property type="evidence" value="ECO:0000314"/>
    <property type="project" value="EcoCyc"/>
</dbReference>
<dbReference type="GO" id="GO:0015871">
    <property type="term" value="P:choline transport"/>
    <property type="evidence" value="ECO:0000318"/>
    <property type="project" value="GO_Central"/>
</dbReference>
<dbReference type="GO" id="GO:0031460">
    <property type="term" value="P:glycine betaine transport"/>
    <property type="evidence" value="ECO:0000318"/>
    <property type="project" value="GO_Central"/>
</dbReference>
<dbReference type="GO" id="GO:1903711">
    <property type="term" value="P:spermidine transmembrane transport"/>
    <property type="evidence" value="ECO:0000314"/>
    <property type="project" value="ComplexPortal"/>
</dbReference>
<dbReference type="GO" id="GO:1990961">
    <property type="term" value="P:xenobiotic detoxification by transmembrane export across the plasma membrane"/>
    <property type="evidence" value="ECO:0000315"/>
    <property type="project" value="EcoCyc"/>
</dbReference>
<dbReference type="FunFam" id="1.10.3730.20:FF:000001">
    <property type="entry name" value="Quaternary ammonium compound resistance transporter SugE"/>
    <property type="match status" value="1"/>
</dbReference>
<dbReference type="Gene3D" id="1.10.3730.20">
    <property type="match status" value="1"/>
</dbReference>
<dbReference type="HAMAP" id="MF_01597">
    <property type="entry name" value="MdtI"/>
    <property type="match status" value="1"/>
</dbReference>
<dbReference type="InterPro" id="IPR000390">
    <property type="entry name" value="Small_drug/metabolite_transptr"/>
</dbReference>
<dbReference type="InterPro" id="IPR045324">
    <property type="entry name" value="Small_multidrug_res"/>
</dbReference>
<dbReference type="InterPro" id="IPR023737">
    <property type="entry name" value="Spermidine_export_MdtI"/>
</dbReference>
<dbReference type="NCBIfam" id="NF007934">
    <property type="entry name" value="PRK10650.1"/>
    <property type="match status" value="1"/>
</dbReference>
<dbReference type="PANTHER" id="PTHR30561">
    <property type="entry name" value="SMR FAMILY PROTON-DEPENDENT DRUG EFFLUX TRANSPORTER SUGE"/>
    <property type="match status" value="1"/>
</dbReference>
<dbReference type="PANTHER" id="PTHR30561:SF6">
    <property type="entry name" value="SPERMIDINE EXPORT PROTEIN MDTI"/>
    <property type="match status" value="1"/>
</dbReference>
<dbReference type="Pfam" id="PF00893">
    <property type="entry name" value="Multi_Drug_Res"/>
    <property type="match status" value="1"/>
</dbReference>
<dbReference type="SUPFAM" id="SSF103481">
    <property type="entry name" value="Multidrug resistance efflux transporter EmrE"/>
    <property type="match status" value="1"/>
</dbReference>
<reference key="1">
    <citation type="journal article" date="1996" name="DNA Res.">
        <title>A 570-kb DNA sequence of the Escherichia coli K-12 genome corresponding to the 28.0-40.1 min region on the linkage map.</title>
        <authorList>
            <person name="Aiba H."/>
            <person name="Baba T."/>
            <person name="Fujita K."/>
            <person name="Hayashi K."/>
            <person name="Inada T."/>
            <person name="Isono K."/>
            <person name="Itoh T."/>
            <person name="Kasai H."/>
            <person name="Kashimoto K."/>
            <person name="Kimura S."/>
            <person name="Kitakawa M."/>
            <person name="Kitagawa M."/>
            <person name="Makino K."/>
            <person name="Miki T."/>
            <person name="Mizobuchi K."/>
            <person name="Mori H."/>
            <person name="Mori T."/>
            <person name="Motomura K."/>
            <person name="Nakade S."/>
            <person name="Nakamura Y."/>
            <person name="Nashimoto H."/>
            <person name="Nishio Y."/>
            <person name="Oshima T."/>
            <person name="Saito N."/>
            <person name="Sampei G."/>
            <person name="Seki Y."/>
            <person name="Sivasundaram S."/>
            <person name="Tagami H."/>
            <person name="Takeda J."/>
            <person name="Takemoto K."/>
            <person name="Takeuchi Y."/>
            <person name="Wada C."/>
            <person name="Yamamoto Y."/>
            <person name="Horiuchi T."/>
        </authorList>
    </citation>
    <scope>NUCLEOTIDE SEQUENCE [LARGE SCALE GENOMIC DNA]</scope>
    <source>
        <strain>K12 / W3110 / ATCC 27325 / DSM 5911</strain>
    </source>
</reference>
<reference key="2">
    <citation type="journal article" date="1997" name="Science">
        <title>The complete genome sequence of Escherichia coli K-12.</title>
        <authorList>
            <person name="Blattner F.R."/>
            <person name="Plunkett G. III"/>
            <person name="Bloch C.A."/>
            <person name="Perna N.T."/>
            <person name="Burland V."/>
            <person name="Riley M."/>
            <person name="Collado-Vides J."/>
            <person name="Glasner J.D."/>
            <person name="Rode C.K."/>
            <person name="Mayhew G.F."/>
            <person name="Gregor J."/>
            <person name="Davis N.W."/>
            <person name="Kirkpatrick H.A."/>
            <person name="Goeden M.A."/>
            <person name="Rose D.J."/>
            <person name="Mau B."/>
            <person name="Shao Y."/>
        </authorList>
    </citation>
    <scope>NUCLEOTIDE SEQUENCE [LARGE SCALE GENOMIC DNA]</scope>
    <source>
        <strain>K12 / MG1655 / ATCC 47076</strain>
    </source>
</reference>
<reference key="3">
    <citation type="journal article" date="2006" name="Mol. Syst. Biol.">
        <title>Highly accurate genome sequences of Escherichia coli K-12 strains MG1655 and W3110.</title>
        <authorList>
            <person name="Hayashi K."/>
            <person name="Morooka N."/>
            <person name="Yamamoto Y."/>
            <person name="Fujita K."/>
            <person name="Isono K."/>
            <person name="Choi S."/>
            <person name="Ohtsubo E."/>
            <person name="Baba T."/>
            <person name="Wanner B.L."/>
            <person name="Mori H."/>
            <person name="Horiuchi T."/>
        </authorList>
    </citation>
    <scope>NUCLEOTIDE SEQUENCE [LARGE SCALE GENOMIC DNA]</scope>
    <source>
        <strain>K12 / W3110 / ATCC 27325 / DSM 5911</strain>
    </source>
</reference>
<reference key="4">
    <citation type="journal article" date="2001" name="J. Bacteriol.">
        <title>Analysis of a complete library of putative drug transporter genes in Escherichia coli.</title>
        <authorList>
            <person name="Nishino K."/>
            <person name="Yamaguchi A."/>
        </authorList>
    </citation>
    <scope>FUNCTION</scope>
</reference>
<reference key="5">
    <citation type="journal article" date="2002" name="Proc. Natl. Acad. Sci. U.S.A.">
        <title>Rapid topology mapping of Escherichia coli inner-membrane proteins by prediction and PhoA/GFP fusion analysis.</title>
        <authorList>
            <person name="Drew D."/>
            <person name="Sjoestrand D."/>
            <person name="Nilsson J."/>
            <person name="Urbig T."/>
            <person name="Chin C.-N."/>
            <person name="de Gier J.-W."/>
            <person name="von Heijne G."/>
        </authorList>
    </citation>
    <scope>TOPOLOGY</scope>
    <source>
        <strain>K12 / JM109 / ATCC 53323</strain>
    </source>
</reference>
<reference key="6">
    <citation type="journal article" date="2005" name="Science">
        <title>Global topology analysis of the Escherichia coli inner membrane proteome.</title>
        <authorList>
            <person name="Daley D.O."/>
            <person name="Rapp M."/>
            <person name="Granseth E."/>
            <person name="Melen K."/>
            <person name="Drew D."/>
            <person name="von Heijne G."/>
        </authorList>
    </citation>
    <scope>TOPOLOGY [LARGE SCALE ANALYSIS]</scope>
    <source>
        <strain>K12 / MG1655 / ATCC 47076</strain>
    </source>
</reference>
<reference key="7">
    <citation type="journal article" date="2008" name="J. Bacteriol.">
        <title>Identification of a spermidine excretion protein complex (MdtJI) in Escherichia coli.</title>
        <authorList>
            <person name="Higashi K."/>
            <person name="Ishigure H."/>
            <person name="Demizu R."/>
            <person name="Uemura T."/>
            <person name="Nishino K."/>
            <person name="Yamaguchi A."/>
            <person name="Kashiwagi K."/>
            <person name="Igarashi K."/>
        </authorList>
    </citation>
    <scope>FUNCTION</scope>
    <scope>SUBUNIT</scope>
    <scope>INDUCTION</scope>
    <scope>MUTAGENESIS OF GLU-5; GLU-19; ASP-60; TRP-68 AND TRP-81</scope>
    <source>
        <strain>K12 / C600 / CR34 / ATCC 23724 / DSM 3925 / LMG 3041 / NCIB 10222</strain>
    </source>
</reference>
<feature type="chain" id="PRO_0000108075" description="Spermidine export protein MdtI">
    <location>
        <begin position="1"/>
        <end position="109"/>
    </location>
</feature>
<feature type="topological domain" description="Periplasmic" evidence="1">
    <location>
        <begin position="1"/>
        <end position="5"/>
    </location>
</feature>
<feature type="transmembrane region" description="Helical" evidence="1">
    <location>
        <begin position="6"/>
        <end position="26"/>
    </location>
</feature>
<feature type="topological domain" description="Cytoplasmic" evidence="1">
    <location>
        <begin position="27"/>
        <end position="35"/>
    </location>
</feature>
<feature type="transmembrane region" description="Helical" evidence="1">
    <location>
        <begin position="36"/>
        <end position="56"/>
    </location>
</feature>
<feature type="topological domain" description="Periplasmic" evidence="1">
    <location>
        <begin position="57"/>
        <end position="63"/>
    </location>
</feature>
<feature type="transmembrane region" description="Helical" evidence="1">
    <location>
        <begin position="64"/>
        <end position="84"/>
    </location>
</feature>
<feature type="topological domain" description="Cytoplasmic" evidence="1">
    <location>
        <begin position="85"/>
        <end position="87"/>
    </location>
</feature>
<feature type="transmembrane region" description="Helical" evidence="1">
    <location>
        <begin position="88"/>
        <end position="108"/>
    </location>
</feature>
<feature type="topological domain" description="Periplasmic" evidence="1">
    <location>
        <position position="109"/>
    </location>
</feature>
<feature type="mutagenesis site" description="Decrease in spermidine excretion." evidence="4">
    <original>E</original>
    <variation>Q</variation>
    <location>
        <position position="5"/>
    </location>
</feature>
<feature type="mutagenesis site" description="Decrease in spermidine excretion." evidence="4">
    <original>E</original>
    <variation>Q</variation>
    <location>
        <position position="19"/>
    </location>
</feature>
<feature type="mutagenesis site" description="Decrease in spermidine excretion." evidence="4">
    <original>D</original>
    <variation>N</variation>
    <location>
        <position position="60"/>
    </location>
</feature>
<feature type="mutagenesis site" description="Decrease in spermidine excretion." evidence="4">
    <original>W</original>
    <variation>L</variation>
    <location>
        <position position="68"/>
    </location>
</feature>
<feature type="mutagenesis site" description="Decrease in spermidine excretion." evidence="4">
    <original>W</original>
    <variation>L</variation>
    <location>
        <position position="81"/>
    </location>
</feature>
<comment type="function">
    <text evidence="3 4">Catalyzes the excretion of spermidine. Can also confer resistance to deoxycholate and SDS.</text>
</comment>
<comment type="subunit">
    <text evidence="6">Forms a complex with MdtJ.</text>
</comment>
<comment type="subcellular location">
    <subcellularLocation>
        <location>Cell inner membrane</location>
        <topology>Multi-pass membrane protein</topology>
    </subcellularLocation>
</comment>
<comment type="induction">
    <text evidence="4">Induced by spermidine.</text>
</comment>
<comment type="similarity">
    <text evidence="2 5">Belongs to the drug/metabolite transporter (DMT) superfamily. Small multidrug resistance (SMR) (TC 2.A.7.1) family. MdtI subfamily.</text>
</comment>